<reference key="1">
    <citation type="journal article" date="2004" name="Proc. Natl. Acad. Sci. U.S.A.">
        <title>Complete genomes of two clinical Staphylococcus aureus strains: evidence for the rapid evolution of virulence and drug resistance.</title>
        <authorList>
            <person name="Holden M.T.G."/>
            <person name="Feil E.J."/>
            <person name="Lindsay J.A."/>
            <person name="Peacock S.J."/>
            <person name="Day N.P.J."/>
            <person name="Enright M.C."/>
            <person name="Foster T.J."/>
            <person name="Moore C.E."/>
            <person name="Hurst L."/>
            <person name="Atkin R."/>
            <person name="Barron A."/>
            <person name="Bason N."/>
            <person name="Bentley S.D."/>
            <person name="Chillingworth C."/>
            <person name="Chillingworth T."/>
            <person name="Churcher C."/>
            <person name="Clark L."/>
            <person name="Corton C."/>
            <person name="Cronin A."/>
            <person name="Doggett J."/>
            <person name="Dowd L."/>
            <person name="Feltwell T."/>
            <person name="Hance Z."/>
            <person name="Harris B."/>
            <person name="Hauser H."/>
            <person name="Holroyd S."/>
            <person name="Jagels K."/>
            <person name="James K.D."/>
            <person name="Lennard N."/>
            <person name="Line A."/>
            <person name="Mayes R."/>
            <person name="Moule S."/>
            <person name="Mungall K."/>
            <person name="Ormond D."/>
            <person name="Quail M.A."/>
            <person name="Rabbinowitsch E."/>
            <person name="Rutherford K.M."/>
            <person name="Sanders M."/>
            <person name="Sharp S."/>
            <person name="Simmonds M."/>
            <person name="Stevens K."/>
            <person name="Whitehead S."/>
            <person name="Barrell B.G."/>
            <person name="Spratt B.G."/>
            <person name="Parkhill J."/>
        </authorList>
    </citation>
    <scope>NUCLEOTIDE SEQUENCE [LARGE SCALE GENOMIC DNA]</scope>
    <source>
        <strain>MRSA252</strain>
    </source>
</reference>
<sequence length="113" mass="13506">MKNTFLICDECQAVNIRTLQKKLEKLDPDAEIVIGCQSYCGPGRRKTFAFVNNRPLAALTEEELIEKVSQQLKKPRDPEEEERLRKRHEERKRRKEEQDRKLKEKLEKRKAQQ</sequence>
<evidence type="ECO:0000255" key="1">
    <source>
        <dbReference type="HAMAP-Rule" id="MF_01863"/>
    </source>
</evidence>
<evidence type="ECO:0000256" key="2">
    <source>
        <dbReference type="SAM" id="MobiDB-lite"/>
    </source>
</evidence>
<gene>
    <name type="ordered locus">SAR0599</name>
</gene>
<feature type="chain" id="PRO_0000372749" description="UPF0741 protein SAR0599">
    <location>
        <begin position="1"/>
        <end position="113"/>
    </location>
</feature>
<feature type="region of interest" description="Disordered" evidence="2">
    <location>
        <begin position="68"/>
        <end position="113"/>
    </location>
</feature>
<feature type="coiled-coil region" evidence="1">
    <location>
        <begin position="78"/>
        <end position="113"/>
    </location>
</feature>
<feature type="compositionally biased region" description="Basic residues" evidence="2">
    <location>
        <begin position="85"/>
        <end position="94"/>
    </location>
</feature>
<feature type="compositionally biased region" description="Basic and acidic residues" evidence="2">
    <location>
        <begin position="95"/>
        <end position="113"/>
    </location>
</feature>
<proteinExistence type="inferred from homology"/>
<comment type="similarity">
    <text evidence="1">Belongs to the UPF0741 family.</text>
</comment>
<accession>Q6GJ75</accession>
<organism>
    <name type="scientific">Staphylococcus aureus (strain MRSA252)</name>
    <dbReference type="NCBI Taxonomy" id="282458"/>
    <lineage>
        <taxon>Bacteria</taxon>
        <taxon>Bacillati</taxon>
        <taxon>Bacillota</taxon>
        <taxon>Bacilli</taxon>
        <taxon>Bacillales</taxon>
        <taxon>Staphylococcaceae</taxon>
        <taxon>Staphylococcus</taxon>
    </lineage>
</organism>
<name>Y599_STAAR</name>
<dbReference type="EMBL" id="BX571856">
    <property type="protein sequence ID" value="CAG39619.1"/>
    <property type="molecule type" value="Genomic_DNA"/>
</dbReference>
<dbReference type="RefSeq" id="WP_000798965.1">
    <property type="nucleotide sequence ID" value="NC_002952.2"/>
</dbReference>
<dbReference type="SMR" id="Q6GJ75"/>
<dbReference type="KEGG" id="sar:SAR0599"/>
<dbReference type="HOGENOM" id="CLU_2156795_0_0_9"/>
<dbReference type="Proteomes" id="UP000000596">
    <property type="component" value="Chromosome"/>
</dbReference>
<dbReference type="HAMAP" id="MF_01863">
    <property type="entry name" value="UPF0741"/>
    <property type="match status" value="1"/>
</dbReference>
<dbReference type="InterPro" id="IPR009910">
    <property type="entry name" value="DUF1450"/>
</dbReference>
<dbReference type="InterPro" id="IPR020880">
    <property type="entry name" value="UPF0741"/>
</dbReference>
<dbReference type="Pfam" id="PF07293">
    <property type="entry name" value="DUF1450"/>
    <property type="match status" value="1"/>
</dbReference>
<protein>
    <recommendedName>
        <fullName evidence="1">UPF0741 protein SAR0599</fullName>
    </recommendedName>
</protein>
<keyword id="KW-0175">Coiled coil</keyword>